<organism>
    <name type="scientific">Homo sapiens</name>
    <name type="common">Human</name>
    <dbReference type="NCBI Taxonomy" id="9606"/>
    <lineage>
        <taxon>Eukaryota</taxon>
        <taxon>Metazoa</taxon>
        <taxon>Chordata</taxon>
        <taxon>Craniata</taxon>
        <taxon>Vertebrata</taxon>
        <taxon>Euteleostomi</taxon>
        <taxon>Mammalia</taxon>
        <taxon>Eutheria</taxon>
        <taxon>Euarchontoglires</taxon>
        <taxon>Primates</taxon>
        <taxon>Haplorrhini</taxon>
        <taxon>Catarrhini</taxon>
        <taxon>Hominidae</taxon>
        <taxon>Homo</taxon>
    </lineage>
</organism>
<accession>Q9HCE3</accession>
<accession>Q4G0V6</accession>
<accession>Q7L7Z7</accession>
<accession>Q96QR7</accession>
<accession>Q9NVJ6</accession>
<protein>
    <recommendedName>
        <fullName>Zinc finger protein 532</fullName>
    </recommendedName>
</protein>
<name>ZN532_HUMAN</name>
<gene>
    <name type="primary">ZNF532</name>
    <name type="synonym">KIAA1629</name>
</gene>
<proteinExistence type="evidence at protein level"/>
<reference key="1">
    <citation type="submission" date="2001-06" db="EMBL/GenBank/DDBJ databases">
        <title>Identification of the full-length cDNA for a novel zinc finger gene on human chromosome 18q21 as a candidate for bipolar disorder.</title>
        <authorList>
            <person name="Chen H."/>
            <person name="Wang N."/>
            <person name="DePaulo R.J. Jr."/>
            <person name="Ross C.A."/>
            <person name="McInnis M.G."/>
        </authorList>
    </citation>
    <scope>NUCLEOTIDE SEQUENCE [MRNA]</scope>
</reference>
<reference key="2">
    <citation type="journal article" date="2000" name="DNA Res.">
        <title>Prediction of the coding sequences of unidentified human genes. XVIII. The complete sequences of 100 new cDNA clones from brain which code for large proteins in vitro.</title>
        <authorList>
            <person name="Nagase T."/>
            <person name="Kikuno R."/>
            <person name="Nakayama M."/>
            <person name="Hirosawa M."/>
            <person name="Ohara O."/>
        </authorList>
    </citation>
    <scope>NUCLEOTIDE SEQUENCE [LARGE SCALE MRNA]</scope>
    <source>
        <tissue>Brain</tissue>
    </source>
</reference>
<reference key="3">
    <citation type="journal article" date="2004" name="Genome Res.">
        <title>The status, quality, and expansion of the NIH full-length cDNA project: the Mammalian Gene Collection (MGC).</title>
        <authorList>
            <consortium name="The MGC Project Team"/>
        </authorList>
    </citation>
    <scope>NUCLEOTIDE SEQUENCE [LARGE SCALE MRNA]</scope>
    <source>
        <tissue>Testis</tissue>
    </source>
</reference>
<reference key="4">
    <citation type="journal article" date="2004" name="Nat. Genet.">
        <title>Complete sequencing and characterization of 21,243 full-length human cDNAs.</title>
        <authorList>
            <person name="Ota T."/>
            <person name="Suzuki Y."/>
            <person name="Nishikawa T."/>
            <person name="Otsuki T."/>
            <person name="Sugiyama T."/>
            <person name="Irie R."/>
            <person name="Wakamatsu A."/>
            <person name="Hayashi K."/>
            <person name="Sato H."/>
            <person name="Nagai K."/>
            <person name="Kimura K."/>
            <person name="Makita H."/>
            <person name="Sekine M."/>
            <person name="Obayashi M."/>
            <person name="Nishi T."/>
            <person name="Shibahara T."/>
            <person name="Tanaka T."/>
            <person name="Ishii S."/>
            <person name="Yamamoto J."/>
            <person name="Saito K."/>
            <person name="Kawai Y."/>
            <person name="Isono Y."/>
            <person name="Nakamura Y."/>
            <person name="Nagahari K."/>
            <person name="Murakami K."/>
            <person name="Yasuda T."/>
            <person name="Iwayanagi T."/>
            <person name="Wagatsuma M."/>
            <person name="Shiratori A."/>
            <person name="Sudo H."/>
            <person name="Hosoiri T."/>
            <person name="Kaku Y."/>
            <person name="Kodaira H."/>
            <person name="Kondo H."/>
            <person name="Sugawara M."/>
            <person name="Takahashi M."/>
            <person name="Kanda K."/>
            <person name="Yokoi T."/>
            <person name="Furuya T."/>
            <person name="Kikkawa E."/>
            <person name="Omura Y."/>
            <person name="Abe K."/>
            <person name="Kamihara K."/>
            <person name="Katsuta N."/>
            <person name="Sato K."/>
            <person name="Tanikawa M."/>
            <person name="Yamazaki M."/>
            <person name="Ninomiya K."/>
            <person name="Ishibashi T."/>
            <person name="Yamashita H."/>
            <person name="Murakawa K."/>
            <person name="Fujimori K."/>
            <person name="Tanai H."/>
            <person name="Kimata M."/>
            <person name="Watanabe M."/>
            <person name="Hiraoka S."/>
            <person name="Chiba Y."/>
            <person name="Ishida S."/>
            <person name="Ono Y."/>
            <person name="Takiguchi S."/>
            <person name="Watanabe S."/>
            <person name="Yosida M."/>
            <person name="Hotuta T."/>
            <person name="Kusano J."/>
            <person name="Kanehori K."/>
            <person name="Takahashi-Fujii A."/>
            <person name="Hara H."/>
            <person name="Tanase T.-O."/>
            <person name="Nomura Y."/>
            <person name="Togiya S."/>
            <person name="Komai F."/>
            <person name="Hara R."/>
            <person name="Takeuchi K."/>
            <person name="Arita M."/>
            <person name="Imose N."/>
            <person name="Musashino K."/>
            <person name="Yuuki H."/>
            <person name="Oshima A."/>
            <person name="Sasaki N."/>
            <person name="Aotsuka S."/>
            <person name="Yoshikawa Y."/>
            <person name="Matsunawa H."/>
            <person name="Ichihara T."/>
            <person name="Shiohata N."/>
            <person name="Sano S."/>
            <person name="Moriya S."/>
            <person name="Momiyama H."/>
            <person name="Satoh N."/>
            <person name="Takami S."/>
            <person name="Terashima Y."/>
            <person name="Suzuki O."/>
            <person name="Nakagawa S."/>
            <person name="Senoh A."/>
            <person name="Mizoguchi H."/>
            <person name="Goto Y."/>
            <person name="Shimizu F."/>
            <person name="Wakebe H."/>
            <person name="Hishigaki H."/>
            <person name="Watanabe T."/>
            <person name="Sugiyama A."/>
            <person name="Takemoto M."/>
            <person name="Kawakami B."/>
            <person name="Yamazaki M."/>
            <person name="Watanabe K."/>
            <person name="Kumagai A."/>
            <person name="Itakura S."/>
            <person name="Fukuzumi Y."/>
            <person name="Fujimori Y."/>
            <person name="Komiyama M."/>
            <person name="Tashiro H."/>
            <person name="Tanigami A."/>
            <person name="Fujiwara T."/>
            <person name="Ono T."/>
            <person name="Yamada K."/>
            <person name="Fujii Y."/>
            <person name="Ozaki K."/>
            <person name="Hirao M."/>
            <person name="Ohmori Y."/>
            <person name="Kawabata A."/>
            <person name="Hikiji T."/>
            <person name="Kobatake N."/>
            <person name="Inagaki H."/>
            <person name="Ikema Y."/>
            <person name="Okamoto S."/>
            <person name="Okitani R."/>
            <person name="Kawakami T."/>
            <person name="Noguchi S."/>
            <person name="Itoh T."/>
            <person name="Shigeta K."/>
            <person name="Senba T."/>
            <person name="Matsumura K."/>
            <person name="Nakajima Y."/>
            <person name="Mizuno T."/>
            <person name="Morinaga M."/>
            <person name="Sasaki M."/>
            <person name="Togashi T."/>
            <person name="Oyama M."/>
            <person name="Hata H."/>
            <person name="Watanabe M."/>
            <person name="Komatsu T."/>
            <person name="Mizushima-Sugano J."/>
            <person name="Satoh T."/>
            <person name="Shirai Y."/>
            <person name="Takahashi Y."/>
            <person name="Nakagawa K."/>
            <person name="Okumura K."/>
            <person name="Nagase T."/>
            <person name="Nomura N."/>
            <person name="Kikuchi H."/>
            <person name="Masuho Y."/>
            <person name="Yamashita R."/>
            <person name="Nakai K."/>
            <person name="Yada T."/>
            <person name="Nakamura Y."/>
            <person name="Ohara O."/>
            <person name="Isogai T."/>
            <person name="Sugano S."/>
        </authorList>
    </citation>
    <scope>NUCLEOTIDE SEQUENCE [LARGE SCALE MRNA] OF 681-1301</scope>
</reference>
<reference key="5">
    <citation type="journal article" date="2006" name="Cell">
        <title>Global, in vivo, and site-specific phosphorylation dynamics in signaling networks.</title>
        <authorList>
            <person name="Olsen J.V."/>
            <person name="Blagoev B."/>
            <person name="Gnad F."/>
            <person name="Macek B."/>
            <person name="Kumar C."/>
            <person name="Mortensen P."/>
            <person name="Mann M."/>
        </authorList>
    </citation>
    <scope>PHOSPHORYLATION [LARGE SCALE ANALYSIS] AT SER-130</scope>
    <scope>IDENTIFICATION BY MASS SPECTROMETRY [LARGE SCALE ANALYSIS]</scope>
    <source>
        <tissue>Cervix carcinoma</tissue>
    </source>
</reference>
<reference key="6">
    <citation type="journal article" date="2008" name="Proc. Natl. Acad. Sci. U.S.A.">
        <title>A quantitative atlas of mitotic phosphorylation.</title>
        <authorList>
            <person name="Dephoure N."/>
            <person name="Zhou C."/>
            <person name="Villen J."/>
            <person name="Beausoleil S.A."/>
            <person name="Bakalarski C.E."/>
            <person name="Elledge S.J."/>
            <person name="Gygi S.P."/>
        </authorList>
    </citation>
    <scope>PHOSPHORYLATION [LARGE SCALE ANALYSIS] AT THR-205</scope>
    <scope>IDENTIFICATION BY MASS SPECTROMETRY [LARGE SCALE ANALYSIS]</scope>
    <source>
        <tissue>Cervix carcinoma</tissue>
    </source>
</reference>
<reference key="7">
    <citation type="journal article" date="2010" name="Sci. Signal.">
        <title>Quantitative phosphoproteomics reveals widespread full phosphorylation site occupancy during mitosis.</title>
        <authorList>
            <person name="Olsen J.V."/>
            <person name="Vermeulen M."/>
            <person name="Santamaria A."/>
            <person name="Kumar C."/>
            <person name="Miller M.L."/>
            <person name="Jensen L.J."/>
            <person name="Gnad F."/>
            <person name="Cox J."/>
            <person name="Jensen T.S."/>
            <person name="Nigg E.A."/>
            <person name="Brunak S."/>
            <person name="Mann M."/>
        </authorList>
    </citation>
    <scope>PHOSPHORYLATION [LARGE SCALE ANALYSIS] AT SER-314</scope>
    <scope>IDENTIFICATION BY MASS SPECTROMETRY [LARGE SCALE ANALYSIS]</scope>
    <source>
        <tissue>Cervix carcinoma</tissue>
    </source>
</reference>
<reference key="8">
    <citation type="journal article" date="2011" name="Sci. Signal.">
        <title>System-wide temporal characterization of the proteome and phosphoproteome of human embryonic stem cell differentiation.</title>
        <authorList>
            <person name="Rigbolt K.T."/>
            <person name="Prokhorova T.A."/>
            <person name="Akimov V."/>
            <person name="Henningsen J."/>
            <person name="Johansen P.T."/>
            <person name="Kratchmarova I."/>
            <person name="Kassem M."/>
            <person name="Mann M."/>
            <person name="Olsen J.V."/>
            <person name="Blagoev B."/>
        </authorList>
    </citation>
    <scope>PHOSPHORYLATION [LARGE SCALE ANALYSIS] AT SER-130; SER-133; SER-134; SER-252; SER-307; SER-314; SER-434 AND SER-1140</scope>
    <scope>IDENTIFICATION BY MASS SPECTROMETRY [LARGE SCALE ANALYSIS]</scope>
</reference>
<reference key="9">
    <citation type="journal article" date="2013" name="J. Proteome Res.">
        <title>Toward a comprehensive characterization of a human cancer cell phosphoproteome.</title>
        <authorList>
            <person name="Zhou H."/>
            <person name="Di Palma S."/>
            <person name="Preisinger C."/>
            <person name="Peng M."/>
            <person name="Polat A.N."/>
            <person name="Heck A.J."/>
            <person name="Mohammed S."/>
        </authorList>
    </citation>
    <scope>PHOSPHORYLATION [LARGE SCALE ANALYSIS] AT SER-314 AND SER-1140</scope>
    <scope>IDENTIFICATION BY MASS SPECTROMETRY [LARGE SCALE ANALYSIS]</scope>
    <source>
        <tissue>Cervix carcinoma</tissue>
    </source>
</reference>
<reference key="10">
    <citation type="journal article" date="2017" name="Nat. Struct. Mol. Biol.">
        <title>Site-specific mapping of the human SUMO proteome reveals co-modification with phosphorylation.</title>
        <authorList>
            <person name="Hendriks I.A."/>
            <person name="Lyon D."/>
            <person name="Young C."/>
            <person name="Jensen L.J."/>
            <person name="Vertegaal A.C."/>
            <person name="Nielsen M.L."/>
        </authorList>
    </citation>
    <scope>SUMOYLATION [LARGE SCALE ANALYSIS] AT LYS-459; LYS-516; LYS-980; LYS-1144 AND LYS-1167</scope>
    <scope>IDENTIFICATION BY MASS SPECTROMETRY [LARGE SCALE ANALYSIS]</scope>
</reference>
<reference key="11">
    <citation type="journal article" date="2006" name="Science">
        <title>The consensus coding sequences of human breast and colorectal cancers.</title>
        <authorList>
            <person name="Sjoeblom T."/>
            <person name="Jones S."/>
            <person name="Wood L.D."/>
            <person name="Parsons D.W."/>
            <person name="Lin J."/>
            <person name="Barber T.D."/>
            <person name="Mandelker D."/>
            <person name="Leary R.J."/>
            <person name="Ptak J."/>
            <person name="Silliman N."/>
            <person name="Szabo S."/>
            <person name="Buckhaults P."/>
            <person name="Farrell C."/>
            <person name="Meeh P."/>
            <person name="Markowitz S.D."/>
            <person name="Willis J."/>
            <person name="Dawson D."/>
            <person name="Willson J.K.V."/>
            <person name="Gazdar A.F."/>
            <person name="Hartigan J."/>
            <person name="Wu L."/>
            <person name="Liu C."/>
            <person name="Parmigiani G."/>
            <person name="Park B.H."/>
            <person name="Bachman K.E."/>
            <person name="Papadopoulos N."/>
            <person name="Vogelstein B."/>
            <person name="Kinzler K.W."/>
            <person name="Velculescu V.E."/>
        </authorList>
    </citation>
    <scope>VARIANT [LARGE SCALE ANALYSIS] LEU-822</scope>
</reference>
<evidence type="ECO:0000250" key="1">
    <source>
        <dbReference type="UniProtKB" id="Q6NXK2"/>
    </source>
</evidence>
<evidence type="ECO:0000255" key="2">
    <source>
        <dbReference type="PROSITE-ProRule" id="PRU00042"/>
    </source>
</evidence>
<evidence type="ECO:0000256" key="3">
    <source>
        <dbReference type="SAM" id="MobiDB-lite"/>
    </source>
</evidence>
<evidence type="ECO:0000269" key="4">
    <source>
    </source>
</evidence>
<evidence type="ECO:0000305" key="5"/>
<evidence type="ECO:0007744" key="6">
    <source>
    </source>
</evidence>
<evidence type="ECO:0007744" key="7">
    <source>
    </source>
</evidence>
<evidence type="ECO:0007744" key="8">
    <source>
    </source>
</evidence>
<evidence type="ECO:0007744" key="9">
    <source>
    </source>
</evidence>
<evidence type="ECO:0007744" key="10">
    <source>
    </source>
</evidence>
<evidence type="ECO:0007744" key="11">
    <source>
    </source>
</evidence>
<feature type="chain" id="PRO_0000299552" description="Zinc finger protein 532">
    <location>
        <begin position="1"/>
        <end position="1301"/>
    </location>
</feature>
<feature type="zinc finger region" description="C2H2-type 1; degenerate" evidence="2">
    <location>
        <begin position="616"/>
        <end position="635"/>
    </location>
</feature>
<feature type="zinc finger region" description="C2H2-type 2; degenerate" evidence="2">
    <location>
        <begin position="754"/>
        <end position="779"/>
    </location>
</feature>
<feature type="zinc finger region" description="C2H2-type 3" evidence="2">
    <location>
        <begin position="783"/>
        <end position="805"/>
    </location>
</feature>
<feature type="zinc finger region" description="C2H2-type 4" evidence="2">
    <location>
        <begin position="842"/>
        <end position="865"/>
    </location>
</feature>
<feature type="zinc finger region" description="C2H2-type 5" evidence="2">
    <location>
        <begin position="870"/>
        <end position="893"/>
    </location>
</feature>
<feature type="zinc finger region" description="C2H2-type 6" evidence="2">
    <location>
        <begin position="905"/>
        <end position="927"/>
    </location>
</feature>
<feature type="zinc finger region" description="C2H2-type 7" evidence="2">
    <location>
        <begin position="936"/>
        <end position="959"/>
    </location>
</feature>
<feature type="zinc finger region" description="C2H2-type 8" evidence="2">
    <location>
        <begin position="1025"/>
        <end position="1048"/>
    </location>
</feature>
<feature type="zinc finger region" description="C2H2-type 9" evidence="2">
    <location>
        <begin position="1055"/>
        <end position="1078"/>
    </location>
</feature>
<feature type="zinc finger region" description="C2H2-type 10; degenerate" evidence="2">
    <location>
        <begin position="1085"/>
        <end position="1111"/>
    </location>
</feature>
<feature type="zinc finger region" description="C2H2-type 11" evidence="2">
    <location>
        <begin position="1203"/>
        <end position="1226"/>
    </location>
</feature>
<feature type="zinc finger region" description="C2H2-type 12" evidence="2">
    <location>
        <begin position="1264"/>
        <end position="1286"/>
    </location>
</feature>
<feature type="region of interest" description="Disordered" evidence="3">
    <location>
        <begin position="26"/>
        <end position="206"/>
    </location>
</feature>
<feature type="region of interest" description="Disordered" evidence="3">
    <location>
        <begin position="223"/>
        <end position="266"/>
    </location>
</feature>
<feature type="region of interest" description="Disordered" evidence="3">
    <location>
        <begin position="281"/>
        <end position="366"/>
    </location>
</feature>
<feature type="region of interest" description="Disordered" evidence="3">
    <location>
        <begin position="983"/>
        <end position="1017"/>
    </location>
</feature>
<feature type="region of interest" description="Disordered" evidence="3">
    <location>
        <begin position="1230"/>
        <end position="1263"/>
    </location>
</feature>
<feature type="compositionally biased region" description="Basic and acidic residues" evidence="3">
    <location>
        <begin position="32"/>
        <end position="52"/>
    </location>
</feature>
<feature type="compositionally biased region" description="Polar residues" evidence="3">
    <location>
        <begin position="84"/>
        <end position="101"/>
    </location>
</feature>
<feature type="compositionally biased region" description="Basic and acidic residues" evidence="3">
    <location>
        <begin position="102"/>
        <end position="111"/>
    </location>
</feature>
<feature type="compositionally biased region" description="Polar residues" evidence="3">
    <location>
        <begin position="122"/>
        <end position="133"/>
    </location>
</feature>
<feature type="compositionally biased region" description="Acidic residues" evidence="3">
    <location>
        <begin position="136"/>
        <end position="151"/>
    </location>
</feature>
<feature type="compositionally biased region" description="Polar residues" evidence="3">
    <location>
        <begin position="158"/>
        <end position="170"/>
    </location>
</feature>
<feature type="compositionally biased region" description="Polar residues" evidence="3">
    <location>
        <begin position="182"/>
        <end position="195"/>
    </location>
</feature>
<feature type="compositionally biased region" description="Basic and acidic residues" evidence="3">
    <location>
        <begin position="196"/>
        <end position="206"/>
    </location>
</feature>
<feature type="compositionally biased region" description="Basic and acidic residues" evidence="3">
    <location>
        <begin position="223"/>
        <end position="250"/>
    </location>
</feature>
<feature type="compositionally biased region" description="Basic and acidic residues" evidence="3">
    <location>
        <begin position="303"/>
        <end position="315"/>
    </location>
</feature>
<feature type="compositionally biased region" description="Low complexity" evidence="3">
    <location>
        <begin position="337"/>
        <end position="359"/>
    </location>
</feature>
<feature type="compositionally biased region" description="Basic and acidic residues" evidence="3">
    <location>
        <begin position="990"/>
        <end position="1017"/>
    </location>
</feature>
<feature type="modified residue" description="Phosphoserine" evidence="6 9">
    <location>
        <position position="130"/>
    </location>
</feature>
<feature type="modified residue" description="Phosphoserine" evidence="9">
    <location>
        <position position="133"/>
    </location>
</feature>
<feature type="modified residue" description="Phosphoserine" evidence="9">
    <location>
        <position position="134"/>
    </location>
</feature>
<feature type="modified residue" description="N6-acetyllysine" evidence="1">
    <location>
        <position position="175"/>
    </location>
</feature>
<feature type="modified residue" description="Phosphothreonine" evidence="7">
    <location>
        <position position="205"/>
    </location>
</feature>
<feature type="modified residue" description="Phosphoserine" evidence="9">
    <location>
        <position position="252"/>
    </location>
</feature>
<feature type="modified residue" description="Phosphoserine" evidence="9">
    <location>
        <position position="307"/>
    </location>
</feature>
<feature type="modified residue" description="Phosphoserine" evidence="8 9 10">
    <location>
        <position position="314"/>
    </location>
</feature>
<feature type="modified residue" description="Phosphoserine" evidence="9">
    <location>
        <position position="434"/>
    </location>
</feature>
<feature type="modified residue" description="Phosphoserine" evidence="9 10">
    <location>
        <position position="1140"/>
    </location>
</feature>
<feature type="cross-link" description="Glycyl lysine isopeptide (Lys-Gly) (interchain with G-Cter in SUMO2)" evidence="11">
    <location>
        <position position="459"/>
    </location>
</feature>
<feature type="cross-link" description="Glycyl lysine isopeptide (Lys-Gly) (interchain with G-Cter in SUMO2)" evidence="11">
    <location>
        <position position="516"/>
    </location>
</feature>
<feature type="cross-link" description="Glycyl lysine isopeptide (Lys-Gly) (interchain with G-Cter in SUMO2)" evidence="11">
    <location>
        <position position="980"/>
    </location>
</feature>
<feature type="cross-link" description="Glycyl lysine isopeptide (Lys-Gly) (interchain with G-Cter in SUMO2)" evidence="11">
    <location>
        <position position="1144"/>
    </location>
</feature>
<feature type="cross-link" description="Glycyl lysine isopeptide (Lys-Gly) (interchain with G-Cter in SUMO2)" evidence="11">
    <location>
        <position position="1167"/>
    </location>
</feature>
<feature type="sequence variant" id="VAR_034846" description="In dbSNP:rs3737506.">
    <original>E</original>
    <variation>D</variation>
    <location>
        <position position="761"/>
    </location>
</feature>
<feature type="sequence variant" id="VAR_035585" description="In a breast cancer sample; somatic mutation; dbSNP:rs771503724." evidence="4">
    <original>S</original>
    <variation>L</variation>
    <location>
        <position position="822"/>
    </location>
</feature>
<feature type="sequence conflict" description="In Ref. 3; AAH36366." evidence="5" ref="3">
    <original>G</original>
    <variation>S</variation>
    <location>
        <position position="972"/>
    </location>
</feature>
<sequence>MTMGDMKTPDFDDLLAAFDIPDMVDPKAAIESGHDDHESHMKQNAHGEDDSHAPSSSDVGVSVIVKNVRNIDSSEGGEKDGHNPTGNGLHNGFLTASSLDSYSKDGAKSLKGDVPASEVTLKDSTFSQFSPISSAEEFDDDEKIEVDDPPDKEDMRSSFRSNVLTGSAPQQDYDKLKALGGENSSKTGLSTSGNVEKNKAVKRETEASSINLSVYEPFKVRKAEDKLKESSDKVLENRVLDGKLSSEKNDTSLPSVAPSKTKSSSKLSSCIAAIAALSAKKAASDSCKEPVANSRESSPLPKEVNDSPRAADKSPESQNLIDGTKKPSLKQPDSPRSISSENSSKGSPSSPAGSTPAIPKVRIKTIKTSSGEIKRTVTRVLPEVDLDSGKKPSEQTASVMASVTSLLSSPASAAVLSSPPRAPLQSAVVTNAVSPAELTPKQVTIKPVATAFLPVSAVKTAGSQVINLKLANNTTVKATVISAASVQSASSAIIKAANAIQQQTVVVPASSLANAKLVPKTVHLANLNLLPQGAQATSELRQVLTKPQQQIKQAIINAAASQPPKKVSRVQVVSSLQSSVVEAFNKVLSSVNPVPVYIPNLSPPANAGITLPTRGYKCLECGDSFALEKSLTQHYDRRSVRIEVTCNHCTKNLVFYNKCSLLSHARGHKEKGVVMQCSHLILKPVPADQMIVSPSSNTSTSTSTLQSPVGAGTHTVTKIQSGITGTVISAPSSTPITPAMPLDEDPSKLCRHSLKCLECNEVFQDETSLATHFQQAADTSGQKTCTICQMLLPNQCSYASHQRIHQHKSPYTCPECGAICRSVHFQTHVTKNCLHYTRRVGFRCVHCNVVYSDVAALKSHIQGSHCEVFYKCPICPMAFKSAPSTHSHAYTQHPGIKIGEPKIIYKCSMCDTVFTLQTLLYRHFDQHIENQKVSVFKCPDCSLLYAQKQLMMDHIKSMHGTLKSIEGPPNLGINLPLSIKPATQNSANQNKEDTKSMNGKEKLEKKSPSPVKKSMETKKVASPGWTCWECDCLFMQRDVYISHVRKEHGKQMKKHPCRQCDKSFSSSHSLCRHNRIKHKGIRKVYACSHCPDSRRTFTKRLMLEKHVQLMHGIKDPDLKEMTDATNEEETEIKEDTKVPSPKRKLEEPVLEFRPPRGAITQPLKKLKINVFKVHKCAVCGFTTENLLQFHEHIPQHKSDGSSYQCRECGLCYTSHVSLSRHLFIVHKLKEPQPVSKQNGAGEDNQQENKPSHEDESPDGAVSDRKCKVCAKTFETEAALNTHMRTHGMAFIKSKRMSSAEK</sequence>
<comment type="function">
    <text>May be involved in transcriptional regulation.</text>
</comment>
<comment type="subcellular location">
    <subcellularLocation>
        <location evidence="5">Nucleus</location>
    </subcellularLocation>
</comment>
<comment type="similarity">
    <text evidence="5">Belongs to the krueppel C2H2-type zinc-finger protein family.</text>
</comment>
<comment type="sequence caution" evidence="5">
    <conflict type="frameshift">
        <sequence resource="EMBL-CDS" id="AAH36366"/>
    </conflict>
</comment>
<comment type="sequence caution" evidence="5">
    <conflict type="erroneous initiation">
        <sequence resource="EMBL-CDS" id="BAA91755"/>
    </conflict>
</comment>
<comment type="sequence caution" evidence="5">
    <conflict type="erroneous initiation">
        <sequence resource="EMBL-CDS" id="BAB13455"/>
    </conflict>
</comment>
<dbReference type="EMBL" id="AY039256">
    <property type="protein sequence ID" value="AAK72122.1"/>
    <property type="molecule type" value="mRNA"/>
</dbReference>
<dbReference type="EMBL" id="AB046849">
    <property type="protein sequence ID" value="BAB13455.1"/>
    <property type="status" value="ALT_INIT"/>
    <property type="molecule type" value="mRNA"/>
</dbReference>
<dbReference type="EMBL" id="BC036366">
    <property type="protein sequence ID" value="AAH36366.1"/>
    <property type="status" value="ALT_FRAME"/>
    <property type="molecule type" value="mRNA"/>
</dbReference>
<dbReference type="EMBL" id="BC130618">
    <property type="protein sequence ID" value="AAI30619.1"/>
    <property type="molecule type" value="mRNA"/>
</dbReference>
<dbReference type="EMBL" id="BC130620">
    <property type="protein sequence ID" value="AAI30621.1"/>
    <property type="molecule type" value="mRNA"/>
</dbReference>
<dbReference type="EMBL" id="AK001559">
    <property type="protein sequence ID" value="BAA91755.1"/>
    <property type="status" value="ALT_INIT"/>
    <property type="molecule type" value="mRNA"/>
</dbReference>
<dbReference type="CCDS" id="CCDS11969.1"/>
<dbReference type="RefSeq" id="NP_001305655.1">
    <property type="nucleotide sequence ID" value="NM_001318726.2"/>
</dbReference>
<dbReference type="RefSeq" id="NP_001305656.1">
    <property type="nucleotide sequence ID" value="NM_001318727.2"/>
</dbReference>
<dbReference type="RefSeq" id="NP_001305657.1">
    <property type="nucleotide sequence ID" value="NM_001318728.2"/>
</dbReference>
<dbReference type="RefSeq" id="NP_001340454.1">
    <property type="nucleotide sequence ID" value="NM_001353525.2"/>
</dbReference>
<dbReference type="RefSeq" id="NP_001340455.1">
    <property type="nucleotide sequence ID" value="NM_001353526.2"/>
</dbReference>
<dbReference type="RefSeq" id="NP_001340456.1">
    <property type="nucleotide sequence ID" value="NM_001353527.2"/>
</dbReference>
<dbReference type="RefSeq" id="NP_001340457.1">
    <property type="nucleotide sequence ID" value="NM_001353528.2"/>
</dbReference>
<dbReference type="RefSeq" id="NP_001340458.1">
    <property type="nucleotide sequence ID" value="NM_001353529.2"/>
</dbReference>
<dbReference type="RefSeq" id="NP_001362841.1">
    <property type="nucleotide sequence ID" value="NM_001375912.1"/>
</dbReference>
<dbReference type="RefSeq" id="NP_060651.2">
    <property type="nucleotide sequence ID" value="NM_018181.5"/>
</dbReference>
<dbReference type="RefSeq" id="XP_016881301.1">
    <property type="nucleotide sequence ID" value="XM_017025812.1"/>
</dbReference>
<dbReference type="RefSeq" id="XP_016881302.1">
    <property type="nucleotide sequence ID" value="XM_017025813.1"/>
</dbReference>
<dbReference type="RefSeq" id="XP_016881303.1">
    <property type="nucleotide sequence ID" value="XM_017025814.1"/>
</dbReference>
<dbReference type="RefSeq" id="XP_016881304.1">
    <property type="nucleotide sequence ID" value="XM_017025815.2"/>
</dbReference>
<dbReference type="RefSeq" id="XP_016881305.1">
    <property type="nucleotide sequence ID" value="XM_017025816.1"/>
</dbReference>
<dbReference type="RefSeq" id="XP_016881306.1">
    <property type="nucleotide sequence ID" value="XM_017025817.1"/>
</dbReference>
<dbReference type="RefSeq" id="XP_016881307.1">
    <property type="nucleotide sequence ID" value="XM_017025818.1"/>
</dbReference>
<dbReference type="RefSeq" id="XP_047293556.1">
    <property type="nucleotide sequence ID" value="XM_047437600.1"/>
</dbReference>
<dbReference type="RefSeq" id="XP_047293557.1">
    <property type="nucleotide sequence ID" value="XM_047437601.1"/>
</dbReference>
<dbReference type="RefSeq" id="XP_054174739.1">
    <property type="nucleotide sequence ID" value="XM_054318764.1"/>
</dbReference>
<dbReference type="RefSeq" id="XP_054174742.1">
    <property type="nucleotide sequence ID" value="XM_054318767.1"/>
</dbReference>
<dbReference type="BioGRID" id="120501">
    <property type="interactions" value="24"/>
</dbReference>
<dbReference type="FunCoup" id="Q9HCE3">
    <property type="interactions" value="640"/>
</dbReference>
<dbReference type="IntAct" id="Q9HCE3">
    <property type="interactions" value="9"/>
</dbReference>
<dbReference type="MINT" id="Q9HCE3"/>
<dbReference type="STRING" id="9606.ENSP00000338217"/>
<dbReference type="GlyCosmos" id="Q9HCE3">
    <property type="glycosylation" value="2 sites, 1 glycan"/>
</dbReference>
<dbReference type="GlyGen" id="Q9HCE3">
    <property type="glycosylation" value="6 sites, 1 O-linked glycan (4 sites)"/>
</dbReference>
<dbReference type="iPTMnet" id="Q9HCE3"/>
<dbReference type="PhosphoSitePlus" id="Q9HCE3"/>
<dbReference type="SwissPalm" id="Q9HCE3"/>
<dbReference type="BioMuta" id="ZNF532"/>
<dbReference type="DMDM" id="158564020"/>
<dbReference type="jPOST" id="Q9HCE3"/>
<dbReference type="MassIVE" id="Q9HCE3"/>
<dbReference type="PaxDb" id="9606-ENSP00000338217"/>
<dbReference type="PeptideAtlas" id="Q9HCE3"/>
<dbReference type="ProteomicsDB" id="81686"/>
<dbReference type="Pumba" id="Q9HCE3"/>
<dbReference type="Antibodypedia" id="9795">
    <property type="antibodies" value="46 antibodies from 10 providers"/>
</dbReference>
<dbReference type="DNASU" id="55205"/>
<dbReference type="Ensembl" id="ENST00000336078.8">
    <property type="protein sequence ID" value="ENSP00000338217.4"/>
    <property type="gene ID" value="ENSG00000074657.14"/>
</dbReference>
<dbReference type="Ensembl" id="ENST00000589288.5">
    <property type="protein sequence ID" value="ENSP00000466007.1"/>
    <property type="gene ID" value="ENSG00000074657.14"/>
</dbReference>
<dbReference type="Ensembl" id="ENST00000591083.5">
    <property type="protein sequence ID" value="ENSP00000468532.1"/>
    <property type="gene ID" value="ENSG00000074657.14"/>
</dbReference>
<dbReference type="Ensembl" id="ENST00000591230.5">
    <property type="protein sequence ID" value="ENSP00000465709.1"/>
    <property type="gene ID" value="ENSG00000074657.14"/>
</dbReference>
<dbReference type="Ensembl" id="ENST00000591808.6">
    <property type="protein sequence ID" value="ENSP00000468238.1"/>
    <property type="gene ID" value="ENSG00000074657.14"/>
</dbReference>
<dbReference type="GeneID" id="55205"/>
<dbReference type="KEGG" id="hsa:55205"/>
<dbReference type="MANE-Select" id="ENST00000591808.6">
    <property type="protein sequence ID" value="ENSP00000468238.1"/>
    <property type="RefSeq nucleotide sequence ID" value="NM_001375912.1"/>
    <property type="RefSeq protein sequence ID" value="NP_001362841.1"/>
</dbReference>
<dbReference type="UCSC" id="uc002lho.4">
    <property type="organism name" value="human"/>
</dbReference>
<dbReference type="AGR" id="HGNC:30940"/>
<dbReference type="CTD" id="55205"/>
<dbReference type="DisGeNET" id="55205"/>
<dbReference type="GeneCards" id="ZNF532"/>
<dbReference type="HGNC" id="HGNC:30940">
    <property type="gene designation" value="ZNF532"/>
</dbReference>
<dbReference type="HPA" id="ENSG00000074657">
    <property type="expression patterns" value="Low tissue specificity"/>
</dbReference>
<dbReference type="MIM" id="619066">
    <property type="type" value="gene"/>
</dbReference>
<dbReference type="neXtProt" id="NX_Q9HCE3"/>
<dbReference type="OpenTargets" id="ENSG00000074657"/>
<dbReference type="PharmGKB" id="PA134901858"/>
<dbReference type="VEuPathDB" id="HostDB:ENSG00000074657"/>
<dbReference type="eggNOG" id="KOG1721">
    <property type="taxonomic scope" value="Eukaryota"/>
</dbReference>
<dbReference type="GeneTree" id="ENSGT00940000154437"/>
<dbReference type="HOGENOM" id="CLU_006283_0_0_1"/>
<dbReference type="InParanoid" id="Q9HCE3"/>
<dbReference type="OMA" id="IPKVHKC"/>
<dbReference type="OrthoDB" id="8856548at2759"/>
<dbReference type="PAN-GO" id="Q9HCE3">
    <property type="GO annotations" value="0 GO annotations based on evolutionary models"/>
</dbReference>
<dbReference type="PhylomeDB" id="Q9HCE3"/>
<dbReference type="TreeFam" id="TF329009"/>
<dbReference type="PathwayCommons" id="Q9HCE3"/>
<dbReference type="SignaLink" id="Q9HCE3"/>
<dbReference type="BioGRID-ORCS" id="55205">
    <property type="hits" value="20 hits in 1173 CRISPR screens"/>
</dbReference>
<dbReference type="ChiTaRS" id="ZNF532">
    <property type="organism name" value="human"/>
</dbReference>
<dbReference type="GenomeRNAi" id="55205"/>
<dbReference type="Pharos" id="Q9HCE3">
    <property type="development level" value="Tdark"/>
</dbReference>
<dbReference type="PRO" id="PR:Q9HCE3"/>
<dbReference type="Proteomes" id="UP000005640">
    <property type="component" value="Chromosome 18"/>
</dbReference>
<dbReference type="RNAct" id="Q9HCE3">
    <property type="molecule type" value="protein"/>
</dbReference>
<dbReference type="Bgee" id="ENSG00000074657">
    <property type="expression patterns" value="Expressed in ganglionic eminence and 202 other cell types or tissues"/>
</dbReference>
<dbReference type="ExpressionAtlas" id="Q9HCE3">
    <property type="expression patterns" value="baseline and differential"/>
</dbReference>
<dbReference type="GO" id="GO:0005634">
    <property type="term" value="C:nucleus"/>
    <property type="evidence" value="ECO:0007669"/>
    <property type="project" value="UniProtKB-SubCell"/>
</dbReference>
<dbReference type="GO" id="GO:0003677">
    <property type="term" value="F:DNA binding"/>
    <property type="evidence" value="ECO:0007669"/>
    <property type="project" value="UniProtKB-KW"/>
</dbReference>
<dbReference type="GO" id="GO:0003700">
    <property type="term" value="F:DNA-binding transcription factor activity"/>
    <property type="evidence" value="ECO:0000303"/>
    <property type="project" value="ARUK-UCL"/>
</dbReference>
<dbReference type="GO" id="GO:0008270">
    <property type="term" value="F:zinc ion binding"/>
    <property type="evidence" value="ECO:0007669"/>
    <property type="project" value="UniProtKB-KW"/>
</dbReference>
<dbReference type="FunFam" id="3.30.160.60:FF:000446">
    <property type="entry name" value="Zinc finger protein"/>
    <property type="match status" value="1"/>
</dbReference>
<dbReference type="FunFam" id="3.30.160.60:FF:001446">
    <property type="entry name" value="Zinc finger protein 532"/>
    <property type="match status" value="1"/>
</dbReference>
<dbReference type="FunFam" id="3.30.160.60:FF:003886">
    <property type="entry name" value="Zinc finger protein 532, isoform CRA_a"/>
    <property type="match status" value="1"/>
</dbReference>
<dbReference type="FunFam" id="3.30.160.60:FF:000797">
    <property type="entry name" value="zinc finger protein 592 isoform X1"/>
    <property type="match status" value="1"/>
</dbReference>
<dbReference type="Gene3D" id="3.30.160.60">
    <property type="entry name" value="Classic Zinc Finger"/>
    <property type="match status" value="7"/>
</dbReference>
<dbReference type="InterPro" id="IPR045914">
    <property type="entry name" value="Zn532-like"/>
</dbReference>
<dbReference type="InterPro" id="IPR041697">
    <property type="entry name" value="Znf-C2H2_11"/>
</dbReference>
<dbReference type="InterPro" id="IPR036236">
    <property type="entry name" value="Znf_C2H2_sf"/>
</dbReference>
<dbReference type="InterPro" id="IPR013087">
    <property type="entry name" value="Znf_C2H2_type"/>
</dbReference>
<dbReference type="PANTHER" id="PTHR47222:SF3">
    <property type="entry name" value="ZINC FINGER PROTEIN 532"/>
    <property type="match status" value="1"/>
</dbReference>
<dbReference type="PANTHER" id="PTHR47222">
    <property type="entry name" value="ZINC FINGER PROTEIN 532-RELATED"/>
    <property type="match status" value="1"/>
</dbReference>
<dbReference type="Pfam" id="PF16622">
    <property type="entry name" value="zf-C2H2_11"/>
    <property type="match status" value="1"/>
</dbReference>
<dbReference type="Pfam" id="PF13912">
    <property type="entry name" value="zf-C2H2_6"/>
    <property type="match status" value="1"/>
</dbReference>
<dbReference type="Pfam" id="PF25412">
    <property type="entry name" value="zf-C2H2_ZNF592"/>
    <property type="match status" value="1"/>
</dbReference>
<dbReference type="SMART" id="SM00355">
    <property type="entry name" value="ZnF_C2H2"/>
    <property type="match status" value="15"/>
</dbReference>
<dbReference type="SUPFAM" id="SSF57667">
    <property type="entry name" value="beta-beta-alpha zinc fingers"/>
    <property type="match status" value="5"/>
</dbReference>
<dbReference type="PROSITE" id="PS00028">
    <property type="entry name" value="ZINC_FINGER_C2H2_1"/>
    <property type="match status" value="9"/>
</dbReference>
<dbReference type="PROSITE" id="PS50157">
    <property type="entry name" value="ZINC_FINGER_C2H2_2"/>
    <property type="match status" value="8"/>
</dbReference>
<keyword id="KW-0007">Acetylation</keyword>
<keyword id="KW-0238">DNA-binding</keyword>
<keyword id="KW-1017">Isopeptide bond</keyword>
<keyword id="KW-0479">Metal-binding</keyword>
<keyword id="KW-0539">Nucleus</keyword>
<keyword id="KW-0597">Phosphoprotein</keyword>
<keyword id="KW-1267">Proteomics identification</keyword>
<keyword id="KW-1185">Reference proteome</keyword>
<keyword id="KW-0677">Repeat</keyword>
<keyword id="KW-0804">Transcription</keyword>
<keyword id="KW-0805">Transcription regulation</keyword>
<keyword id="KW-0832">Ubl conjugation</keyword>
<keyword id="KW-0862">Zinc</keyword>
<keyword id="KW-0863">Zinc-finger</keyword>